<dbReference type="EMBL" id="CR848347">
    <property type="protein sequence ID" value="CAJ83068.1"/>
    <property type="molecule type" value="mRNA"/>
</dbReference>
<dbReference type="EMBL" id="BC087817">
    <property type="protein sequence ID" value="AAH87817.1"/>
    <property type="molecule type" value="mRNA"/>
</dbReference>
<dbReference type="RefSeq" id="NP_001011243.1">
    <property type="nucleotide sequence ID" value="NM_001011243.1"/>
</dbReference>
<dbReference type="RefSeq" id="XP_012816450.1">
    <property type="nucleotide sequence ID" value="XM_012960996.3"/>
</dbReference>
<dbReference type="RefSeq" id="XP_012816451.1">
    <property type="nucleotide sequence ID" value="XM_012960997.3"/>
</dbReference>
<dbReference type="RefSeq" id="XP_012816452.1">
    <property type="nucleotide sequence ID" value="XM_012960998.3"/>
</dbReference>
<dbReference type="RefSeq" id="XP_012816453.1">
    <property type="nucleotide sequence ID" value="XM_012960999.2"/>
</dbReference>
<dbReference type="SMR" id="Q5M8V0"/>
<dbReference type="FunCoup" id="Q5M8V0">
    <property type="interactions" value="2989"/>
</dbReference>
<dbReference type="STRING" id="8364.ENSXETP00000018690"/>
<dbReference type="PaxDb" id="8364-ENSXETP00000063168"/>
<dbReference type="DNASU" id="496686"/>
<dbReference type="GeneID" id="496686"/>
<dbReference type="KEGG" id="xtr:496686"/>
<dbReference type="AGR" id="Xenbase:XB-GENE-948236"/>
<dbReference type="CTD" id="91408"/>
<dbReference type="Xenbase" id="XB-GENE-948236">
    <property type="gene designation" value="btf3l4"/>
</dbReference>
<dbReference type="eggNOG" id="KOG2240">
    <property type="taxonomic scope" value="Eukaryota"/>
</dbReference>
<dbReference type="HOGENOM" id="CLU_098726_3_0_1"/>
<dbReference type="InParanoid" id="Q5M8V0"/>
<dbReference type="OMA" id="RMQQSVR"/>
<dbReference type="OrthoDB" id="8033832at2759"/>
<dbReference type="PhylomeDB" id="Q5M8V0"/>
<dbReference type="Proteomes" id="UP000008143">
    <property type="component" value="Chromosome 4"/>
</dbReference>
<dbReference type="Bgee" id="ENSXETG00000008056">
    <property type="expression patterns" value="Expressed in ovary and 14 other cell types or tissues"/>
</dbReference>
<dbReference type="CDD" id="cd22055">
    <property type="entry name" value="NAC_BTF3"/>
    <property type="match status" value="1"/>
</dbReference>
<dbReference type="FunFam" id="2.20.70.30:FF:000001">
    <property type="entry name" value="Transcription factor BTF3 homolog"/>
    <property type="match status" value="1"/>
</dbReference>
<dbReference type="Gene3D" id="2.20.70.30">
    <property type="entry name" value="Nascent polypeptide-associated complex domain"/>
    <property type="match status" value="1"/>
</dbReference>
<dbReference type="InterPro" id="IPR039370">
    <property type="entry name" value="BTF3"/>
</dbReference>
<dbReference type="InterPro" id="IPR038187">
    <property type="entry name" value="NAC_A/B_dom_sf"/>
</dbReference>
<dbReference type="InterPro" id="IPR002715">
    <property type="entry name" value="Nas_poly-pep-assoc_cplx_dom"/>
</dbReference>
<dbReference type="PANTHER" id="PTHR10351">
    <property type="entry name" value="TRANSCRIPTION FACTOR BTF3 FAMILY MEMBER"/>
    <property type="match status" value="1"/>
</dbReference>
<dbReference type="Pfam" id="PF01849">
    <property type="entry name" value="NAC"/>
    <property type="match status" value="1"/>
</dbReference>
<dbReference type="SMART" id="SM01407">
    <property type="entry name" value="NAC"/>
    <property type="match status" value="1"/>
</dbReference>
<dbReference type="PROSITE" id="PS51151">
    <property type="entry name" value="NAC_AB"/>
    <property type="match status" value="1"/>
</dbReference>
<proteinExistence type="evidence at transcript level"/>
<protein>
    <recommendedName>
        <fullName>Transcription factor BTF3 homolog 4</fullName>
    </recommendedName>
    <alternativeName>
        <fullName>Basic transcription factor 3-like 4</fullName>
    </alternativeName>
</protein>
<accession>Q5M8V0</accession>
<reference key="1">
    <citation type="submission" date="2006-10" db="EMBL/GenBank/DDBJ databases">
        <authorList>
            <consortium name="Sanger Xenopus tropicalis EST/cDNA project"/>
        </authorList>
    </citation>
    <scope>NUCLEOTIDE SEQUENCE [LARGE SCALE MRNA]</scope>
    <source>
        <tissue>Neurula</tissue>
    </source>
</reference>
<reference key="2">
    <citation type="submission" date="2004-12" db="EMBL/GenBank/DDBJ databases">
        <authorList>
            <consortium name="NIH - Xenopus Gene Collection (XGC) project"/>
        </authorList>
    </citation>
    <scope>NUCLEOTIDE SEQUENCE [LARGE SCALE MRNA]</scope>
</reference>
<gene>
    <name type="primary">btf3l4</name>
    <name type="ORF">TNeu120e23.1</name>
</gene>
<sequence>MNQEKLAKLQAQVRIGGKGTARRKKKVVHRTATADDKKLQSSLKKLAVNNIAGIEEVNMIKDDGTVIHFNNPKVQASLSANTFAITGHAEVKQITEMLPGILSQLGADSLTSLRKLAEQFPRQVLDSKASKPEDIEEEDDDVPELVGNFDEASKNEAN</sequence>
<evidence type="ECO:0000255" key="1">
    <source>
        <dbReference type="PROSITE-ProRule" id="PRU00507"/>
    </source>
</evidence>
<evidence type="ECO:0000256" key="2">
    <source>
        <dbReference type="SAM" id="MobiDB-lite"/>
    </source>
</evidence>
<evidence type="ECO:0000305" key="3"/>
<keyword id="KW-1185">Reference proteome</keyword>
<name>BT3L4_XENTR</name>
<comment type="similarity">
    <text evidence="3">Belongs to the NAC-beta family.</text>
</comment>
<feature type="chain" id="PRO_0000307385" description="Transcription factor BTF3 homolog 4">
    <location>
        <begin position="1"/>
        <end position="158"/>
    </location>
</feature>
<feature type="domain" description="NAC-A/B" evidence="1">
    <location>
        <begin position="33"/>
        <end position="98"/>
    </location>
</feature>
<feature type="region of interest" description="Disordered" evidence="2">
    <location>
        <begin position="123"/>
        <end position="158"/>
    </location>
</feature>
<feature type="compositionally biased region" description="Acidic residues" evidence="2">
    <location>
        <begin position="134"/>
        <end position="143"/>
    </location>
</feature>
<organism>
    <name type="scientific">Xenopus tropicalis</name>
    <name type="common">Western clawed frog</name>
    <name type="synonym">Silurana tropicalis</name>
    <dbReference type="NCBI Taxonomy" id="8364"/>
    <lineage>
        <taxon>Eukaryota</taxon>
        <taxon>Metazoa</taxon>
        <taxon>Chordata</taxon>
        <taxon>Craniata</taxon>
        <taxon>Vertebrata</taxon>
        <taxon>Euteleostomi</taxon>
        <taxon>Amphibia</taxon>
        <taxon>Batrachia</taxon>
        <taxon>Anura</taxon>
        <taxon>Pipoidea</taxon>
        <taxon>Pipidae</taxon>
        <taxon>Xenopodinae</taxon>
        <taxon>Xenopus</taxon>
        <taxon>Silurana</taxon>
    </lineage>
</organism>